<sequence length="447" mass="49998">MKTPKVGFVSLGCPKALVDSERILTQLKTDGYQVASDYDGADLVVVNTCGFIESAVQESLDAIGEAMSENGRVIVTGCLGKDEDKIRQMHPNVLKVTGAAAYQDVMEAVHEYVPAPPKHNPFIDLVPEQGIRLTPKHYAYLKISEGCNHRCTFCIIPSMRGDLVSRPVGSVLEEAAALKRAGVKEILVISQDTSAYGVDTKYKLDFWNGQPVKTKFFDMCEALGQLGIWVRLHYVYPYPHVDAVIDLMAQGKILPYLDIPFQHASPRVLKLMKRPAHSENTLEKIKLWREKCPNLVIRSTFVVGFPGETEEDFQILLDWLVEAQLDRVGCFTYSPVEGATANDLPDHVPEEIKQERYERFMQVQQQISAAKLQKRIGQTMTVLVDSLEDEYPVAVARSYADAPEIDGNVFVEDIDKSTIQPGDMLEVEITDADEYDLFAKLIKIKSV</sequence>
<gene>
    <name evidence="1" type="primary">rimO</name>
    <name type="ordered locus">AB57_2321</name>
</gene>
<dbReference type="EC" id="2.8.4.4" evidence="1"/>
<dbReference type="EMBL" id="CP001182">
    <property type="protein sequence ID" value="ACJ42437.1"/>
    <property type="molecule type" value="Genomic_DNA"/>
</dbReference>
<dbReference type="RefSeq" id="WP_000856677.1">
    <property type="nucleotide sequence ID" value="NC_011586.2"/>
</dbReference>
<dbReference type="SMR" id="B7I9V4"/>
<dbReference type="KEGG" id="abn:AB57_2321"/>
<dbReference type="HOGENOM" id="CLU_018697_0_0_6"/>
<dbReference type="Proteomes" id="UP000007094">
    <property type="component" value="Chromosome"/>
</dbReference>
<dbReference type="GO" id="GO:0005829">
    <property type="term" value="C:cytosol"/>
    <property type="evidence" value="ECO:0007669"/>
    <property type="project" value="TreeGrafter"/>
</dbReference>
<dbReference type="GO" id="GO:0051539">
    <property type="term" value="F:4 iron, 4 sulfur cluster binding"/>
    <property type="evidence" value="ECO:0007669"/>
    <property type="project" value="UniProtKB-UniRule"/>
</dbReference>
<dbReference type="GO" id="GO:0035599">
    <property type="term" value="F:aspartic acid methylthiotransferase activity"/>
    <property type="evidence" value="ECO:0007669"/>
    <property type="project" value="TreeGrafter"/>
</dbReference>
<dbReference type="GO" id="GO:0046872">
    <property type="term" value="F:metal ion binding"/>
    <property type="evidence" value="ECO:0007669"/>
    <property type="project" value="UniProtKB-KW"/>
</dbReference>
<dbReference type="GO" id="GO:0103039">
    <property type="term" value="F:protein methylthiotransferase activity"/>
    <property type="evidence" value="ECO:0007669"/>
    <property type="project" value="UniProtKB-EC"/>
</dbReference>
<dbReference type="GO" id="GO:0006400">
    <property type="term" value="P:tRNA modification"/>
    <property type="evidence" value="ECO:0007669"/>
    <property type="project" value="InterPro"/>
</dbReference>
<dbReference type="CDD" id="cd01335">
    <property type="entry name" value="Radical_SAM"/>
    <property type="match status" value="1"/>
</dbReference>
<dbReference type="FunFam" id="3.40.50.12160:FF:000002">
    <property type="entry name" value="Ribosomal protein S12 methylthiotransferase RimO"/>
    <property type="match status" value="1"/>
</dbReference>
<dbReference type="FunFam" id="3.80.30.20:FF:000001">
    <property type="entry name" value="tRNA-2-methylthio-N(6)-dimethylallyladenosine synthase 2"/>
    <property type="match status" value="1"/>
</dbReference>
<dbReference type="Gene3D" id="3.40.50.12160">
    <property type="entry name" value="Methylthiotransferase, N-terminal domain"/>
    <property type="match status" value="1"/>
</dbReference>
<dbReference type="Gene3D" id="2.40.50.140">
    <property type="entry name" value="Nucleic acid-binding proteins"/>
    <property type="match status" value="1"/>
</dbReference>
<dbReference type="Gene3D" id="3.80.30.20">
    <property type="entry name" value="tm_1862 like domain"/>
    <property type="match status" value="1"/>
</dbReference>
<dbReference type="HAMAP" id="MF_01865">
    <property type="entry name" value="MTTase_RimO"/>
    <property type="match status" value="1"/>
</dbReference>
<dbReference type="InterPro" id="IPR006638">
    <property type="entry name" value="Elp3/MiaA/NifB-like_rSAM"/>
</dbReference>
<dbReference type="InterPro" id="IPR005839">
    <property type="entry name" value="Methylthiotransferase"/>
</dbReference>
<dbReference type="InterPro" id="IPR020612">
    <property type="entry name" value="Methylthiotransferase_CS"/>
</dbReference>
<dbReference type="InterPro" id="IPR013848">
    <property type="entry name" value="Methylthiotransferase_N"/>
</dbReference>
<dbReference type="InterPro" id="IPR038135">
    <property type="entry name" value="Methylthiotransferase_N_sf"/>
</dbReference>
<dbReference type="InterPro" id="IPR012340">
    <property type="entry name" value="NA-bd_OB-fold"/>
</dbReference>
<dbReference type="InterPro" id="IPR005840">
    <property type="entry name" value="Ribosomal_uS12_MeSTrfase_RimO"/>
</dbReference>
<dbReference type="InterPro" id="IPR007197">
    <property type="entry name" value="rSAM"/>
</dbReference>
<dbReference type="InterPro" id="IPR023404">
    <property type="entry name" value="rSAM_horseshoe"/>
</dbReference>
<dbReference type="InterPro" id="IPR002792">
    <property type="entry name" value="TRAM_dom"/>
</dbReference>
<dbReference type="NCBIfam" id="TIGR01125">
    <property type="entry name" value="30S ribosomal protein S12 methylthiotransferase RimO"/>
    <property type="match status" value="1"/>
</dbReference>
<dbReference type="NCBIfam" id="TIGR00089">
    <property type="entry name" value="MiaB/RimO family radical SAM methylthiotransferase"/>
    <property type="match status" value="1"/>
</dbReference>
<dbReference type="PANTHER" id="PTHR43837">
    <property type="entry name" value="RIBOSOMAL PROTEIN S12 METHYLTHIOTRANSFERASE RIMO"/>
    <property type="match status" value="1"/>
</dbReference>
<dbReference type="PANTHER" id="PTHR43837:SF1">
    <property type="entry name" value="RIBOSOMAL PROTEIN US12 METHYLTHIOTRANSFERASE RIMO"/>
    <property type="match status" value="1"/>
</dbReference>
<dbReference type="Pfam" id="PF04055">
    <property type="entry name" value="Radical_SAM"/>
    <property type="match status" value="1"/>
</dbReference>
<dbReference type="Pfam" id="PF18693">
    <property type="entry name" value="TRAM_2"/>
    <property type="match status" value="1"/>
</dbReference>
<dbReference type="Pfam" id="PF00919">
    <property type="entry name" value="UPF0004"/>
    <property type="match status" value="1"/>
</dbReference>
<dbReference type="SFLD" id="SFLDG01082">
    <property type="entry name" value="B12-binding_domain_containing"/>
    <property type="match status" value="1"/>
</dbReference>
<dbReference type="SFLD" id="SFLDS00029">
    <property type="entry name" value="Radical_SAM"/>
    <property type="match status" value="1"/>
</dbReference>
<dbReference type="SFLD" id="SFLDF00274">
    <property type="entry name" value="ribosomal_protein_S12_methylth"/>
    <property type="match status" value="1"/>
</dbReference>
<dbReference type="SMART" id="SM00729">
    <property type="entry name" value="Elp3"/>
    <property type="match status" value="1"/>
</dbReference>
<dbReference type="SUPFAM" id="SSF102114">
    <property type="entry name" value="Radical SAM enzymes"/>
    <property type="match status" value="1"/>
</dbReference>
<dbReference type="PROSITE" id="PS51449">
    <property type="entry name" value="MTTASE_N"/>
    <property type="match status" value="1"/>
</dbReference>
<dbReference type="PROSITE" id="PS01278">
    <property type="entry name" value="MTTASE_RADICAL"/>
    <property type="match status" value="1"/>
</dbReference>
<dbReference type="PROSITE" id="PS51918">
    <property type="entry name" value="RADICAL_SAM"/>
    <property type="match status" value="1"/>
</dbReference>
<dbReference type="PROSITE" id="PS50926">
    <property type="entry name" value="TRAM"/>
    <property type="match status" value="1"/>
</dbReference>
<reference key="1">
    <citation type="journal article" date="2008" name="J. Bacteriol.">
        <title>Comparative genome sequence analysis of multidrug-resistant Acinetobacter baumannii.</title>
        <authorList>
            <person name="Adams M.D."/>
            <person name="Goglin K."/>
            <person name="Molyneaux N."/>
            <person name="Hujer K.M."/>
            <person name="Lavender H."/>
            <person name="Jamison J.J."/>
            <person name="MacDonald I.J."/>
            <person name="Martin K.M."/>
            <person name="Russo T."/>
            <person name="Campagnari A.A."/>
            <person name="Hujer A.M."/>
            <person name="Bonomo R.A."/>
            <person name="Gill S.R."/>
        </authorList>
    </citation>
    <scope>NUCLEOTIDE SEQUENCE [LARGE SCALE GENOMIC DNA]</scope>
    <source>
        <strain>AB0057</strain>
    </source>
</reference>
<comment type="function">
    <text evidence="1">Catalyzes the methylthiolation of an aspartic acid residue of ribosomal protein uS12.</text>
</comment>
<comment type="catalytic activity">
    <reaction evidence="1">
        <text>L-aspartate(89)-[ribosomal protein uS12]-hydrogen + (sulfur carrier)-SH + AH2 + 2 S-adenosyl-L-methionine = 3-methylsulfanyl-L-aspartate(89)-[ribosomal protein uS12]-hydrogen + (sulfur carrier)-H + 5'-deoxyadenosine + L-methionine + A + S-adenosyl-L-homocysteine + 2 H(+)</text>
        <dbReference type="Rhea" id="RHEA:37087"/>
        <dbReference type="Rhea" id="RHEA-COMP:10460"/>
        <dbReference type="Rhea" id="RHEA-COMP:10461"/>
        <dbReference type="Rhea" id="RHEA-COMP:14737"/>
        <dbReference type="Rhea" id="RHEA-COMP:14739"/>
        <dbReference type="ChEBI" id="CHEBI:13193"/>
        <dbReference type="ChEBI" id="CHEBI:15378"/>
        <dbReference type="ChEBI" id="CHEBI:17319"/>
        <dbReference type="ChEBI" id="CHEBI:17499"/>
        <dbReference type="ChEBI" id="CHEBI:29917"/>
        <dbReference type="ChEBI" id="CHEBI:29961"/>
        <dbReference type="ChEBI" id="CHEBI:57844"/>
        <dbReference type="ChEBI" id="CHEBI:57856"/>
        <dbReference type="ChEBI" id="CHEBI:59789"/>
        <dbReference type="ChEBI" id="CHEBI:64428"/>
        <dbReference type="ChEBI" id="CHEBI:73599"/>
        <dbReference type="EC" id="2.8.4.4"/>
    </reaction>
</comment>
<comment type="cofactor">
    <cofactor evidence="1">
        <name>[4Fe-4S] cluster</name>
        <dbReference type="ChEBI" id="CHEBI:49883"/>
    </cofactor>
    <text evidence="1">Binds 2 [4Fe-4S] clusters. One cluster is coordinated with 3 cysteines and an exchangeable S-adenosyl-L-methionine.</text>
</comment>
<comment type="subcellular location">
    <subcellularLocation>
        <location evidence="1">Cytoplasm</location>
    </subcellularLocation>
</comment>
<comment type="similarity">
    <text evidence="1">Belongs to the methylthiotransferase family. RimO subfamily.</text>
</comment>
<protein>
    <recommendedName>
        <fullName evidence="1">Ribosomal protein uS12 methylthiotransferase RimO</fullName>
        <shortName evidence="1">uS12 MTTase</shortName>
        <shortName evidence="1">uS12 methylthiotransferase</shortName>
        <ecNumber evidence="1">2.8.4.4</ecNumber>
    </recommendedName>
    <alternativeName>
        <fullName evidence="1">Ribosomal protein uS12 (aspartate-C(3))-methylthiotransferase</fullName>
    </alternativeName>
    <alternativeName>
        <fullName evidence="1">Ribosome maturation factor RimO</fullName>
    </alternativeName>
</protein>
<evidence type="ECO:0000255" key="1">
    <source>
        <dbReference type="HAMAP-Rule" id="MF_01865"/>
    </source>
</evidence>
<evidence type="ECO:0000255" key="2">
    <source>
        <dbReference type="PROSITE-ProRule" id="PRU01266"/>
    </source>
</evidence>
<accession>B7I9V4</accession>
<name>RIMO_ACIB5</name>
<feature type="chain" id="PRO_0000374678" description="Ribosomal protein uS12 methylthiotransferase RimO">
    <location>
        <begin position="1"/>
        <end position="447"/>
    </location>
</feature>
<feature type="domain" description="MTTase N-terminal" evidence="1">
    <location>
        <begin position="4"/>
        <end position="114"/>
    </location>
</feature>
<feature type="domain" description="Radical SAM core" evidence="2">
    <location>
        <begin position="133"/>
        <end position="370"/>
    </location>
</feature>
<feature type="domain" description="TRAM" evidence="1">
    <location>
        <begin position="373"/>
        <end position="443"/>
    </location>
</feature>
<feature type="binding site" evidence="1">
    <location>
        <position position="13"/>
    </location>
    <ligand>
        <name>[4Fe-4S] cluster</name>
        <dbReference type="ChEBI" id="CHEBI:49883"/>
        <label>1</label>
    </ligand>
</feature>
<feature type="binding site" evidence="1">
    <location>
        <position position="49"/>
    </location>
    <ligand>
        <name>[4Fe-4S] cluster</name>
        <dbReference type="ChEBI" id="CHEBI:49883"/>
        <label>1</label>
    </ligand>
</feature>
<feature type="binding site" evidence="1">
    <location>
        <position position="78"/>
    </location>
    <ligand>
        <name>[4Fe-4S] cluster</name>
        <dbReference type="ChEBI" id="CHEBI:49883"/>
        <label>1</label>
    </ligand>
</feature>
<feature type="binding site" evidence="1">
    <location>
        <position position="147"/>
    </location>
    <ligand>
        <name>[4Fe-4S] cluster</name>
        <dbReference type="ChEBI" id="CHEBI:49883"/>
        <label>2</label>
        <note>4Fe-4S-S-AdoMet</note>
    </ligand>
</feature>
<feature type="binding site" evidence="1">
    <location>
        <position position="151"/>
    </location>
    <ligand>
        <name>[4Fe-4S] cluster</name>
        <dbReference type="ChEBI" id="CHEBI:49883"/>
        <label>2</label>
        <note>4Fe-4S-S-AdoMet</note>
    </ligand>
</feature>
<feature type="binding site" evidence="1">
    <location>
        <position position="154"/>
    </location>
    <ligand>
        <name>[4Fe-4S] cluster</name>
        <dbReference type="ChEBI" id="CHEBI:49883"/>
        <label>2</label>
        <note>4Fe-4S-S-AdoMet</note>
    </ligand>
</feature>
<keyword id="KW-0004">4Fe-4S</keyword>
<keyword id="KW-0963">Cytoplasm</keyword>
<keyword id="KW-0408">Iron</keyword>
<keyword id="KW-0411">Iron-sulfur</keyword>
<keyword id="KW-0479">Metal-binding</keyword>
<keyword id="KW-0949">S-adenosyl-L-methionine</keyword>
<keyword id="KW-0808">Transferase</keyword>
<proteinExistence type="inferred from homology"/>
<organism>
    <name type="scientific">Acinetobacter baumannii (strain AB0057)</name>
    <dbReference type="NCBI Taxonomy" id="480119"/>
    <lineage>
        <taxon>Bacteria</taxon>
        <taxon>Pseudomonadati</taxon>
        <taxon>Pseudomonadota</taxon>
        <taxon>Gammaproteobacteria</taxon>
        <taxon>Moraxellales</taxon>
        <taxon>Moraxellaceae</taxon>
        <taxon>Acinetobacter</taxon>
        <taxon>Acinetobacter calcoaceticus/baumannii complex</taxon>
    </lineage>
</organism>